<name>RPO3_THEKO</name>
<sequence>MVEFKILEKRPDSIKFIVSGVDVPFANALRRTILSEVPTFAVDEVEFLENDSALFDEIIAHRLAMIPLTTPHERFSLDALELDDYTVTLSLEAEGPGMVYSGDLKSSDGDVKPANPNIPIVKLAEGQRLTFNAYARLGRGKDHAKWQPGFVYYKYLTKIHVSKDVPDWEELKELAERRGLPVEESDEEIVITTIKAFYLPRKFEEHMGKGIREEIVPGSFVFTVETNGELPVEEIVSIALKILMRKSDRFINELHKLAD</sequence>
<keyword id="KW-0002">3D-structure</keyword>
<keyword id="KW-0963">Cytoplasm</keyword>
<keyword id="KW-0240">DNA-directed RNA polymerase</keyword>
<keyword id="KW-0548">Nucleotidyltransferase</keyword>
<keyword id="KW-1185">Reference proteome</keyword>
<keyword id="KW-0804">Transcription</keyword>
<keyword id="KW-0808">Transferase</keyword>
<accession>Q5JJF4</accession>
<organism>
    <name type="scientific">Thermococcus kodakarensis (strain ATCC BAA-918 / JCM 12380 / KOD1)</name>
    <name type="common">Pyrococcus kodakaraensis (strain KOD1)</name>
    <dbReference type="NCBI Taxonomy" id="69014"/>
    <lineage>
        <taxon>Archaea</taxon>
        <taxon>Methanobacteriati</taxon>
        <taxon>Methanobacteriota</taxon>
        <taxon>Thermococci</taxon>
        <taxon>Thermococcales</taxon>
        <taxon>Thermococcaceae</taxon>
        <taxon>Thermococcus</taxon>
    </lineage>
</organism>
<proteinExistence type="evidence at protein level"/>
<feature type="chain" id="PRO_0000132763" description="DNA-directed RNA polymerase subunit Rpo3">
    <location>
        <begin position="1"/>
        <end position="259"/>
    </location>
</feature>
<feature type="strand" evidence="2">
    <location>
        <begin position="3"/>
        <end position="10"/>
    </location>
</feature>
<feature type="strand" evidence="2">
    <location>
        <begin position="13"/>
        <end position="20"/>
    </location>
</feature>
<feature type="helix" evidence="2">
    <location>
        <begin position="23"/>
        <end position="35"/>
    </location>
</feature>
<feature type="strand" evidence="2">
    <location>
        <begin position="39"/>
        <end position="50"/>
    </location>
</feature>
<feature type="strand" evidence="2">
    <location>
        <begin position="52"/>
        <end position="54"/>
    </location>
</feature>
<feature type="helix" evidence="2">
    <location>
        <begin position="56"/>
        <end position="64"/>
    </location>
</feature>
<feature type="turn" evidence="2">
    <location>
        <begin position="72"/>
        <end position="74"/>
    </location>
</feature>
<feature type="strand" evidence="2">
    <location>
        <begin position="87"/>
        <end position="100"/>
    </location>
</feature>
<feature type="helix" evidence="2">
    <location>
        <begin position="101"/>
        <end position="103"/>
    </location>
</feature>
<feature type="strand" evidence="2">
    <location>
        <begin position="105"/>
        <end position="108"/>
    </location>
</feature>
<feature type="strand" evidence="2">
    <location>
        <begin position="111"/>
        <end position="114"/>
    </location>
</feature>
<feature type="strand" evidence="2">
    <location>
        <begin position="119"/>
        <end position="123"/>
    </location>
</feature>
<feature type="strand" evidence="2">
    <location>
        <begin position="128"/>
        <end position="138"/>
    </location>
</feature>
<feature type="turn" evidence="2">
    <location>
        <begin position="140"/>
        <end position="142"/>
    </location>
</feature>
<feature type="helix" evidence="2">
    <location>
        <begin position="144"/>
        <end position="146"/>
    </location>
</feature>
<feature type="strand" evidence="2">
    <location>
        <begin position="149"/>
        <end position="162"/>
    </location>
</feature>
<feature type="helix" evidence="2">
    <location>
        <begin position="168"/>
        <end position="177"/>
    </location>
</feature>
<feature type="strand" evidence="2">
    <location>
        <begin position="182"/>
        <end position="184"/>
    </location>
</feature>
<feature type="strand" evidence="2">
    <location>
        <begin position="186"/>
        <end position="192"/>
    </location>
</feature>
<feature type="helix" evidence="2">
    <location>
        <begin position="201"/>
        <end position="206"/>
    </location>
</feature>
<feature type="turn" evidence="2">
    <location>
        <begin position="208"/>
        <end position="210"/>
    </location>
</feature>
<feature type="strand" evidence="2">
    <location>
        <begin position="211"/>
        <end position="226"/>
    </location>
</feature>
<feature type="strand" evidence="2">
    <location>
        <begin position="228"/>
        <end position="230"/>
    </location>
</feature>
<feature type="helix" evidence="2">
    <location>
        <begin position="232"/>
        <end position="255"/>
    </location>
</feature>
<gene>
    <name evidence="1" type="primary">rpo3</name>
    <name evidence="1" type="synonym">rpoD</name>
    <name type="ordered locus">TK1503</name>
</gene>
<reference key="1">
    <citation type="journal article" date="2005" name="Genome Res.">
        <title>Complete genome sequence of the hyperthermophilic archaeon Thermococcus kodakaraensis KOD1 and comparison with Pyrococcus genomes.</title>
        <authorList>
            <person name="Fukui T."/>
            <person name="Atomi H."/>
            <person name="Kanai T."/>
            <person name="Matsumi R."/>
            <person name="Fujiwara S."/>
            <person name="Imanaka T."/>
        </authorList>
    </citation>
    <scope>NUCLEOTIDE SEQUENCE [LARGE SCALE GENOMIC DNA]</scope>
    <source>
        <strain>ATCC BAA-918 / JCM 12380 / KOD1</strain>
    </source>
</reference>
<evidence type="ECO:0000255" key="1">
    <source>
        <dbReference type="HAMAP-Rule" id="MF_00320"/>
    </source>
</evidence>
<evidence type="ECO:0007829" key="2">
    <source>
        <dbReference type="PDB" id="4QJV"/>
    </source>
</evidence>
<comment type="function">
    <text evidence="1">DNA-dependent RNA polymerase (RNAP) catalyzes the transcription of DNA into RNA using the four ribonucleoside triphosphates as substrates.</text>
</comment>
<comment type="catalytic activity">
    <reaction evidence="1">
        <text>RNA(n) + a ribonucleoside 5'-triphosphate = RNA(n+1) + diphosphate</text>
        <dbReference type="Rhea" id="RHEA:21248"/>
        <dbReference type="Rhea" id="RHEA-COMP:14527"/>
        <dbReference type="Rhea" id="RHEA-COMP:17342"/>
        <dbReference type="ChEBI" id="CHEBI:33019"/>
        <dbReference type="ChEBI" id="CHEBI:61557"/>
        <dbReference type="ChEBI" id="CHEBI:140395"/>
        <dbReference type="EC" id="2.7.7.6"/>
    </reaction>
</comment>
<comment type="subunit">
    <text evidence="1">Part of the RNA polymerase complex.</text>
</comment>
<comment type="subcellular location">
    <subcellularLocation>
        <location evidence="1">Cytoplasm</location>
    </subcellularLocation>
</comment>
<comment type="similarity">
    <text evidence="1">Belongs to the archaeal Rpo3/eukaryotic RPB3 RNA polymerase subunit family.</text>
</comment>
<protein>
    <recommendedName>
        <fullName evidence="1">DNA-directed RNA polymerase subunit Rpo3</fullName>
        <ecNumber evidence="1">2.7.7.6</ecNumber>
    </recommendedName>
    <alternativeName>
        <fullName evidence="1">DNA-directed RNA polymerase subunit D</fullName>
    </alternativeName>
</protein>
<dbReference type="EC" id="2.7.7.6" evidence="1"/>
<dbReference type="EMBL" id="AP006878">
    <property type="protein sequence ID" value="BAD85692.1"/>
    <property type="molecule type" value="Genomic_DNA"/>
</dbReference>
<dbReference type="RefSeq" id="WP_011250454.1">
    <property type="nucleotide sequence ID" value="NC_006624.1"/>
</dbReference>
<dbReference type="PDB" id="4QIW">
    <property type="method" value="X-ray"/>
    <property type="resolution" value="3.50 A"/>
    <property type="chains" value="D/O=1-259"/>
</dbReference>
<dbReference type="PDB" id="4QJV">
    <property type="method" value="X-ray"/>
    <property type="resolution" value="1.60 A"/>
    <property type="chains" value="A/C=1-259"/>
</dbReference>
<dbReference type="PDB" id="6KF3">
    <property type="method" value="EM"/>
    <property type="resolution" value="3.90 A"/>
    <property type="chains" value="D=1-259"/>
</dbReference>
<dbReference type="PDB" id="6KF4">
    <property type="method" value="EM"/>
    <property type="resolution" value="3.97 A"/>
    <property type="chains" value="D=1-259"/>
</dbReference>
<dbReference type="PDB" id="6KF9">
    <property type="method" value="EM"/>
    <property type="resolution" value="3.79 A"/>
    <property type="chains" value="D=1-259"/>
</dbReference>
<dbReference type="PDB" id="9BCT">
    <property type="method" value="EM"/>
    <property type="resolution" value="2.50 A"/>
    <property type="chains" value="D=1-259"/>
</dbReference>
<dbReference type="PDB" id="9BCU">
    <property type="method" value="EM"/>
    <property type="resolution" value="2.20 A"/>
    <property type="chains" value="D=1-259"/>
</dbReference>
<dbReference type="PDBsum" id="4QIW"/>
<dbReference type="PDBsum" id="4QJV"/>
<dbReference type="PDBsum" id="6KF3"/>
<dbReference type="PDBsum" id="6KF4"/>
<dbReference type="PDBsum" id="6KF9"/>
<dbReference type="PDBsum" id="9BCT"/>
<dbReference type="PDBsum" id="9BCU"/>
<dbReference type="SMR" id="Q5JJF4"/>
<dbReference type="FunCoup" id="Q5JJF4">
    <property type="interactions" value="70"/>
</dbReference>
<dbReference type="IntAct" id="Q5JJF4">
    <property type="interactions" value="1"/>
</dbReference>
<dbReference type="MINT" id="Q5JJF4"/>
<dbReference type="STRING" id="69014.TK1503"/>
<dbReference type="EnsemblBacteria" id="BAD85692">
    <property type="protein sequence ID" value="BAD85692"/>
    <property type="gene ID" value="TK1503"/>
</dbReference>
<dbReference type="GeneID" id="3234626"/>
<dbReference type="KEGG" id="tko:TK1503"/>
<dbReference type="PATRIC" id="fig|69014.16.peg.1463"/>
<dbReference type="eggNOG" id="arCOG04241">
    <property type="taxonomic scope" value="Archaea"/>
</dbReference>
<dbReference type="HOGENOM" id="CLU_038421_3_1_2"/>
<dbReference type="InParanoid" id="Q5JJF4"/>
<dbReference type="PhylomeDB" id="Q5JJF4"/>
<dbReference type="EvolutionaryTrace" id="Q5JJF4"/>
<dbReference type="Proteomes" id="UP000000536">
    <property type="component" value="Chromosome"/>
</dbReference>
<dbReference type="GO" id="GO:0005737">
    <property type="term" value="C:cytoplasm"/>
    <property type="evidence" value="ECO:0007669"/>
    <property type="project" value="UniProtKB-SubCell"/>
</dbReference>
<dbReference type="GO" id="GO:0000428">
    <property type="term" value="C:DNA-directed RNA polymerase complex"/>
    <property type="evidence" value="ECO:0007669"/>
    <property type="project" value="UniProtKB-KW"/>
</dbReference>
<dbReference type="GO" id="GO:0003677">
    <property type="term" value="F:DNA binding"/>
    <property type="evidence" value="ECO:0007669"/>
    <property type="project" value="UniProtKB-UniRule"/>
</dbReference>
<dbReference type="GO" id="GO:0003899">
    <property type="term" value="F:DNA-directed RNA polymerase activity"/>
    <property type="evidence" value="ECO:0007669"/>
    <property type="project" value="UniProtKB-UniRule"/>
</dbReference>
<dbReference type="GO" id="GO:0046983">
    <property type="term" value="F:protein dimerization activity"/>
    <property type="evidence" value="ECO:0007669"/>
    <property type="project" value="InterPro"/>
</dbReference>
<dbReference type="GO" id="GO:0006351">
    <property type="term" value="P:DNA-templated transcription"/>
    <property type="evidence" value="ECO:0007669"/>
    <property type="project" value="UniProtKB-UniRule"/>
</dbReference>
<dbReference type="CDD" id="cd07030">
    <property type="entry name" value="RNAP_D"/>
    <property type="match status" value="1"/>
</dbReference>
<dbReference type="Gene3D" id="3.30.70.3110">
    <property type="match status" value="1"/>
</dbReference>
<dbReference type="Gene3D" id="2.170.120.12">
    <property type="entry name" value="DNA-directed RNA polymerase, insert domain"/>
    <property type="match status" value="1"/>
</dbReference>
<dbReference type="Gene3D" id="3.30.1360.10">
    <property type="entry name" value="RNA polymerase, RBP11-like subunit"/>
    <property type="match status" value="1"/>
</dbReference>
<dbReference type="HAMAP" id="MF_00320">
    <property type="entry name" value="RNApol_arch_Rpo3"/>
    <property type="match status" value="1"/>
</dbReference>
<dbReference type="InterPro" id="IPR001514">
    <property type="entry name" value="DNA-dir_RNA_pol_30-40kDasu_CS"/>
</dbReference>
<dbReference type="InterPro" id="IPR011262">
    <property type="entry name" value="DNA-dir_RNA_pol_insert"/>
</dbReference>
<dbReference type="InterPro" id="IPR011263">
    <property type="entry name" value="DNA-dir_RNA_pol_RpoA/D/Rpb3"/>
</dbReference>
<dbReference type="InterPro" id="IPR036603">
    <property type="entry name" value="RBP11-like"/>
</dbReference>
<dbReference type="InterPro" id="IPR022842">
    <property type="entry name" value="RNAP_Rpo3/Rpb3/RPAC1"/>
</dbReference>
<dbReference type="InterPro" id="IPR036643">
    <property type="entry name" value="RNApol_insert_sf"/>
</dbReference>
<dbReference type="InterPro" id="IPR050518">
    <property type="entry name" value="Rpo3/RPB3_RNA_Pol_subunit"/>
</dbReference>
<dbReference type="NCBIfam" id="NF001988">
    <property type="entry name" value="PRK00783.1"/>
    <property type="match status" value="1"/>
</dbReference>
<dbReference type="PANTHER" id="PTHR11800">
    <property type="entry name" value="DNA-DIRECTED RNA POLYMERASE"/>
    <property type="match status" value="1"/>
</dbReference>
<dbReference type="PANTHER" id="PTHR11800:SF2">
    <property type="entry name" value="DNA-DIRECTED RNA POLYMERASE II SUBUNIT RPB3"/>
    <property type="match status" value="1"/>
</dbReference>
<dbReference type="Pfam" id="PF01000">
    <property type="entry name" value="RNA_pol_A_bac"/>
    <property type="match status" value="1"/>
</dbReference>
<dbReference type="Pfam" id="PF01193">
    <property type="entry name" value="RNA_pol_L"/>
    <property type="match status" value="1"/>
</dbReference>
<dbReference type="SMART" id="SM00662">
    <property type="entry name" value="RPOLD"/>
    <property type="match status" value="1"/>
</dbReference>
<dbReference type="SUPFAM" id="SSF56553">
    <property type="entry name" value="Insert subdomain of RNA polymerase alpha subunit"/>
    <property type="match status" value="1"/>
</dbReference>
<dbReference type="SUPFAM" id="SSF55257">
    <property type="entry name" value="RBP11-like subunits of RNA polymerase"/>
    <property type="match status" value="1"/>
</dbReference>
<dbReference type="PROSITE" id="PS00446">
    <property type="entry name" value="RNA_POL_D_30KD"/>
    <property type="match status" value="1"/>
</dbReference>